<reference key="1">
    <citation type="submission" date="2007-03" db="EMBL/GenBank/DDBJ databases">
        <title>Genome sequence of Rhodospirillum centenum.</title>
        <authorList>
            <person name="Touchman J.W."/>
            <person name="Bauer C."/>
            <person name="Blankenship R.E."/>
        </authorList>
    </citation>
    <scope>NUCLEOTIDE SEQUENCE [LARGE SCALE GENOMIC DNA]</scope>
    <source>
        <strain>ATCC 51521 / SW</strain>
    </source>
</reference>
<name>PGK_RHOCS</name>
<evidence type="ECO:0000255" key="1">
    <source>
        <dbReference type="HAMAP-Rule" id="MF_00145"/>
    </source>
</evidence>
<proteinExistence type="inferred from homology"/>
<accession>B6IWR7</accession>
<feature type="chain" id="PRO_1000096368" description="Phosphoglycerate kinase">
    <location>
        <begin position="1"/>
        <end position="396"/>
    </location>
</feature>
<feature type="binding site" evidence="1">
    <location>
        <begin position="21"/>
        <end position="23"/>
    </location>
    <ligand>
        <name>substrate</name>
    </ligand>
</feature>
<feature type="binding site" evidence="1">
    <location>
        <position position="36"/>
    </location>
    <ligand>
        <name>substrate</name>
    </ligand>
</feature>
<feature type="binding site" evidence="1">
    <location>
        <begin position="59"/>
        <end position="62"/>
    </location>
    <ligand>
        <name>substrate</name>
    </ligand>
</feature>
<feature type="binding site" evidence="1">
    <location>
        <position position="118"/>
    </location>
    <ligand>
        <name>substrate</name>
    </ligand>
</feature>
<feature type="binding site" evidence="1">
    <location>
        <position position="151"/>
    </location>
    <ligand>
        <name>substrate</name>
    </ligand>
</feature>
<feature type="binding site" evidence="1">
    <location>
        <position position="201"/>
    </location>
    <ligand>
        <name>ATP</name>
        <dbReference type="ChEBI" id="CHEBI:30616"/>
    </ligand>
</feature>
<feature type="binding site" evidence="1">
    <location>
        <position position="323"/>
    </location>
    <ligand>
        <name>ATP</name>
        <dbReference type="ChEBI" id="CHEBI:30616"/>
    </ligand>
</feature>
<feature type="binding site" evidence="1">
    <location>
        <begin position="353"/>
        <end position="356"/>
    </location>
    <ligand>
        <name>ATP</name>
        <dbReference type="ChEBI" id="CHEBI:30616"/>
    </ligand>
</feature>
<organism>
    <name type="scientific">Rhodospirillum centenum (strain ATCC 51521 / SW)</name>
    <dbReference type="NCBI Taxonomy" id="414684"/>
    <lineage>
        <taxon>Bacteria</taxon>
        <taxon>Pseudomonadati</taxon>
        <taxon>Pseudomonadota</taxon>
        <taxon>Alphaproteobacteria</taxon>
        <taxon>Rhodospirillales</taxon>
        <taxon>Rhodospirillaceae</taxon>
        <taxon>Rhodospirillum</taxon>
    </lineage>
</organism>
<sequence>MAFKTLDDLSVAGKTVLVRGDLNVPVQDGRVSDTTRLDRLAPTLKELAGKGAKVVVLSHFGRPKGGPDAKNSLRQVVPALEAALGLPVAFAEDCVGESARAAIAAIEPGQVVLLENTRFHAGEEKNDPELARQMAALGDIYVNDAFSAAHRAHASTEGIAHLLPSAAGRLMQAELEALGKALARPERPVMAVVGGAKISTKLDLLLNMVTKVDMLVLGGGMANTFLFAQGRPVGKSLAEKDMADQARAIMEKAAASGCEILLPQDGAMAKEFKAGAPHRVVPVEQIADDEMMLDVGPATVEFVGLKLQGAKTVVWNGPMGAFEIRPFDSGTNAVAGLVAALTGDGRVLSVAGGGDTVAALEQAGVAGRFSYVSTAGGAFLEWLEGKELPGVKALGA</sequence>
<comment type="catalytic activity">
    <reaction evidence="1">
        <text>(2R)-3-phosphoglycerate + ATP = (2R)-3-phospho-glyceroyl phosphate + ADP</text>
        <dbReference type="Rhea" id="RHEA:14801"/>
        <dbReference type="ChEBI" id="CHEBI:30616"/>
        <dbReference type="ChEBI" id="CHEBI:57604"/>
        <dbReference type="ChEBI" id="CHEBI:58272"/>
        <dbReference type="ChEBI" id="CHEBI:456216"/>
        <dbReference type="EC" id="2.7.2.3"/>
    </reaction>
</comment>
<comment type="pathway">
    <text evidence="1">Carbohydrate degradation; glycolysis; pyruvate from D-glyceraldehyde 3-phosphate: step 2/5.</text>
</comment>
<comment type="subunit">
    <text evidence="1">Monomer.</text>
</comment>
<comment type="subcellular location">
    <subcellularLocation>
        <location evidence="1">Cytoplasm</location>
    </subcellularLocation>
</comment>
<comment type="similarity">
    <text evidence="1">Belongs to the phosphoglycerate kinase family.</text>
</comment>
<dbReference type="EC" id="2.7.2.3" evidence="1"/>
<dbReference type="EMBL" id="CP000613">
    <property type="protein sequence ID" value="ACJ00741.1"/>
    <property type="molecule type" value="Genomic_DNA"/>
</dbReference>
<dbReference type="RefSeq" id="WP_012568519.1">
    <property type="nucleotide sequence ID" value="NC_011420.2"/>
</dbReference>
<dbReference type="SMR" id="B6IWR7"/>
<dbReference type="STRING" id="414684.RC1_3381"/>
<dbReference type="KEGG" id="rce:RC1_3381"/>
<dbReference type="eggNOG" id="COG0126">
    <property type="taxonomic scope" value="Bacteria"/>
</dbReference>
<dbReference type="HOGENOM" id="CLU_025427_0_2_5"/>
<dbReference type="OrthoDB" id="9808460at2"/>
<dbReference type="UniPathway" id="UPA00109">
    <property type="reaction ID" value="UER00185"/>
</dbReference>
<dbReference type="Proteomes" id="UP000001591">
    <property type="component" value="Chromosome"/>
</dbReference>
<dbReference type="GO" id="GO:0005829">
    <property type="term" value="C:cytosol"/>
    <property type="evidence" value="ECO:0007669"/>
    <property type="project" value="TreeGrafter"/>
</dbReference>
<dbReference type="GO" id="GO:0043531">
    <property type="term" value="F:ADP binding"/>
    <property type="evidence" value="ECO:0007669"/>
    <property type="project" value="TreeGrafter"/>
</dbReference>
<dbReference type="GO" id="GO:0005524">
    <property type="term" value="F:ATP binding"/>
    <property type="evidence" value="ECO:0007669"/>
    <property type="project" value="UniProtKB-KW"/>
</dbReference>
<dbReference type="GO" id="GO:0004618">
    <property type="term" value="F:phosphoglycerate kinase activity"/>
    <property type="evidence" value="ECO:0007669"/>
    <property type="project" value="UniProtKB-UniRule"/>
</dbReference>
<dbReference type="GO" id="GO:0006094">
    <property type="term" value="P:gluconeogenesis"/>
    <property type="evidence" value="ECO:0007669"/>
    <property type="project" value="TreeGrafter"/>
</dbReference>
<dbReference type="GO" id="GO:0006096">
    <property type="term" value="P:glycolytic process"/>
    <property type="evidence" value="ECO:0007669"/>
    <property type="project" value="UniProtKB-UniRule"/>
</dbReference>
<dbReference type="FunFam" id="3.40.50.1260:FF:000006">
    <property type="entry name" value="Phosphoglycerate kinase"/>
    <property type="match status" value="1"/>
</dbReference>
<dbReference type="FunFam" id="3.40.50.1260:FF:000031">
    <property type="entry name" value="Phosphoglycerate kinase 1"/>
    <property type="match status" value="1"/>
</dbReference>
<dbReference type="Gene3D" id="3.40.50.1260">
    <property type="entry name" value="Phosphoglycerate kinase, N-terminal domain"/>
    <property type="match status" value="2"/>
</dbReference>
<dbReference type="HAMAP" id="MF_00145">
    <property type="entry name" value="Phosphoglyc_kinase"/>
    <property type="match status" value="1"/>
</dbReference>
<dbReference type="InterPro" id="IPR001576">
    <property type="entry name" value="Phosphoglycerate_kinase"/>
</dbReference>
<dbReference type="InterPro" id="IPR015911">
    <property type="entry name" value="Phosphoglycerate_kinase_CS"/>
</dbReference>
<dbReference type="InterPro" id="IPR015824">
    <property type="entry name" value="Phosphoglycerate_kinase_N"/>
</dbReference>
<dbReference type="InterPro" id="IPR036043">
    <property type="entry name" value="Phosphoglycerate_kinase_sf"/>
</dbReference>
<dbReference type="PANTHER" id="PTHR11406">
    <property type="entry name" value="PHOSPHOGLYCERATE KINASE"/>
    <property type="match status" value="1"/>
</dbReference>
<dbReference type="PANTHER" id="PTHR11406:SF23">
    <property type="entry name" value="PHOSPHOGLYCERATE KINASE 1, CHLOROPLASTIC-RELATED"/>
    <property type="match status" value="1"/>
</dbReference>
<dbReference type="Pfam" id="PF00162">
    <property type="entry name" value="PGK"/>
    <property type="match status" value="1"/>
</dbReference>
<dbReference type="PIRSF" id="PIRSF000724">
    <property type="entry name" value="Pgk"/>
    <property type="match status" value="1"/>
</dbReference>
<dbReference type="PRINTS" id="PR00477">
    <property type="entry name" value="PHGLYCKINASE"/>
</dbReference>
<dbReference type="SUPFAM" id="SSF53748">
    <property type="entry name" value="Phosphoglycerate kinase"/>
    <property type="match status" value="1"/>
</dbReference>
<dbReference type="PROSITE" id="PS00111">
    <property type="entry name" value="PGLYCERATE_KINASE"/>
    <property type="match status" value="1"/>
</dbReference>
<keyword id="KW-0067">ATP-binding</keyword>
<keyword id="KW-0963">Cytoplasm</keyword>
<keyword id="KW-0324">Glycolysis</keyword>
<keyword id="KW-0418">Kinase</keyword>
<keyword id="KW-0547">Nucleotide-binding</keyword>
<keyword id="KW-1185">Reference proteome</keyword>
<keyword id="KW-0808">Transferase</keyword>
<protein>
    <recommendedName>
        <fullName evidence="1">Phosphoglycerate kinase</fullName>
        <ecNumber evidence="1">2.7.2.3</ecNumber>
    </recommendedName>
</protein>
<gene>
    <name evidence="1" type="primary">pgk</name>
    <name type="ordered locus">RC1_3381</name>
</gene>